<proteinExistence type="evidence at protein level"/>
<comment type="function">
    <text>Omega-conotoxins act at presynaptic membranes, they bind and block voltage-gated calcium channels (Cav). Acts on high voltage-activated (HVA) calcium currents in molluscan neurons.</text>
</comment>
<comment type="subcellular location">
    <subcellularLocation>
        <location>Secreted</location>
    </subcellularLocation>
</comment>
<comment type="tissue specificity">
    <text>Expressed by the venom duct.</text>
</comment>
<comment type="domain">
    <text evidence="1">The presence of a 'disulfide through disulfide knot' structurally defines this protein as a knottin.</text>
</comment>
<comment type="domain">
    <text>The cysteine framework is VI/VII (C-C-CC-C-C).</text>
</comment>
<comment type="mass spectrometry"/>
<comment type="similarity">
    <text evidence="5">Belongs to the conotoxin O1 superfamily.</text>
</comment>
<sequence>MKLTCMMIVAVLFLTAWTVVTAEPHSSNVLENLYLKAHHEMENPEASKLNTRDDDCEPPGNFCGMIKIGPPCCSGWCFFACA</sequence>
<evidence type="ECO:0000250" key="1"/>
<evidence type="ECO:0000250" key="2">
    <source>
        <dbReference type="UniProtKB" id="Q26443"/>
    </source>
</evidence>
<evidence type="ECO:0000255" key="3"/>
<evidence type="ECO:0000269" key="4">
    <source>
    </source>
</evidence>
<evidence type="ECO:0000305" key="5"/>
<keyword id="KW-0108">Calcium channel impairing toxin</keyword>
<keyword id="KW-0903">Direct protein sequencing</keyword>
<keyword id="KW-1015">Disulfide bond</keyword>
<keyword id="KW-0872">Ion channel impairing toxin</keyword>
<keyword id="KW-0960">Knottin</keyword>
<keyword id="KW-0528">Neurotoxin</keyword>
<keyword id="KW-0638">Presynaptic neurotoxin</keyword>
<keyword id="KW-0964">Secreted</keyword>
<keyword id="KW-0732">Signal</keyword>
<keyword id="KW-0800">Toxin</keyword>
<keyword id="KW-1218">Voltage-gated calcium channel impairing toxin</keyword>
<protein>
    <recommendedName>
        <fullName>Omega-conotoxin PnVIB</fullName>
    </recommendedName>
</protein>
<reference key="1">
    <citation type="journal article" date="2001" name="Mol. Biol. Evol.">
        <title>Mechanisms for evolving hypervariability: the case of conopeptides.</title>
        <authorList>
            <person name="Conticello S.G."/>
            <person name="Gilad Y."/>
            <person name="Avidan N."/>
            <person name="Ben-Asher E."/>
            <person name="Levy Z."/>
            <person name="Fainzilber M."/>
        </authorList>
    </citation>
    <scope>NUCLEOTIDE SEQUENCE [MRNA]</scope>
</reference>
<reference key="2">
    <citation type="journal article" date="1996" name="J. Neurochem.">
        <title>Novel omega-conotoxins block dihydropyridine-insensitive high voltage-activated calcium channels in molluscan neurons.</title>
        <authorList>
            <person name="Kits K.S."/>
            <person name="Lodder J.C."/>
            <person name="van der Schors R.C."/>
            <person name="Li K.W."/>
            <person name="Geraerts W.P.M."/>
            <person name="Fainzilber M."/>
        </authorList>
    </citation>
    <scope>PROTEIN SEQUENCE OF 53-82</scope>
    <scope>MASS SPECTROMETRY</scope>
    <source>
        <tissue>Venom</tissue>
    </source>
</reference>
<accession>P56713</accession>
<accession>Q9BP48</accession>
<accession>Q9U661</accession>
<dbReference type="EMBL" id="AF193255">
    <property type="protein sequence ID" value="AAF07966.1"/>
    <property type="molecule type" value="mRNA"/>
</dbReference>
<dbReference type="EMBL" id="AF215109">
    <property type="protein sequence ID" value="AAG60530.1"/>
    <property type="molecule type" value="mRNA"/>
</dbReference>
<dbReference type="SMR" id="P56713"/>
<dbReference type="ConoServer" id="787">
    <property type="toxin name" value="PnMKLT1-01112 (partial)"/>
</dbReference>
<dbReference type="ConoServer" id="1741">
    <property type="toxin name" value="PnVIB"/>
</dbReference>
<dbReference type="ConoServer" id="1088">
    <property type="toxin name" value="PnVIB precursor"/>
</dbReference>
<dbReference type="GO" id="GO:0005576">
    <property type="term" value="C:extracellular region"/>
    <property type="evidence" value="ECO:0007669"/>
    <property type="project" value="UniProtKB-SubCell"/>
</dbReference>
<dbReference type="GO" id="GO:0044231">
    <property type="term" value="C:host cell presynaptic membrane"/>
    <property type="evidence" value="ECO:0007669"/>
    <property type="project" value="UniProtKB-KW"/>
</dbReference>
<dbReference type="GO" id="GO:0005246">
    <property type="term" value="F:calcium channel regulator activity"/>
    <property type="evidence" value="ECO:0007669"/>
    <property type="project" value="UniProtKB-KW"/>
</dbReference>
<dbReference type="GO" id="GO:0008200">
    <property type="term" value="F:ion channel inhibitor activity"/>
    <property type="evidence" value="ECO:0007669"/>
    <property type="project" value="InterPro"/>
</dbReference>
<dbReference type="GO" id="GO:0090729">
    <property type="term" value="F:toxin activity"/>
    <property type="evidence" value="ECO:0007669"/>
    <property type="project" value="UniProtKB-KW"/>
</dbReference>
<dbReference type="InterPro" id="IPR004214">
    <property type="entry name" value="Conotoxin"/>
</dbReference>
<dbReference type="InterPro" id="IPR012321">
    <property type="entry name" value="Conotoxin_omega-typ_CS"/>
</dbReference>
<dbReference type="Pfam" id="PF02950">
    <property type="entry name" value="Conotoxin"/>
    <property type="match status" value="1"/>
</dbReference>
<dbReference type="PROSITE" id="PS60004">
    <property type="entry name" value="OMEGA_CONOTOXIN"/>
    <property type="match status" value="1"/>
</dbReference>
<organism>
    <name type="scientific">Conus pennaceus</name>
    <name type="common">Feathered cone</name>
    <name type="synonym">Conus episcopus</name>
    <dbReference type="NCBI Taxonomy" id="37335"/>
    <lineage>
        <taxon>Eukaryota</taxon>
        <taxon>Metazoa</taxon>
        <taxon>Spiralia</taxon>
        <taxon>Lophotrochozoa</taxon>
        <taxon>Mollusca</taxon>
        <taxon>Gastropoda</taxon>
        <taxon>Caenogastropoda</taxon>
        <taxon>Neogastropoda</taxon>
        <taxon>Conoidea</taxon>
        <taxon>Conidae</taxon>
        <taxon>Conus</taxon>
        <taxon>Darioconus</taxon>
    </lineage>
</organism>
<name>O16B_CONPE</name>
<feature type="signal peptide" evidence="3">
    <location>
        <begin position="1"/>
        <end position="22"/>
    </location>
</feature>
<feature type="propeptide" id="PRO_0000392705" evidence="4">
    <location>
        <begin position="23"/>
        <end position="52"/>
    </location>
</feature>
<feature type="peptide" id="PRO_0000044477" description="Omega-conotoxin PnVIB">
    <location>
        <begin position="53"/>
        <end position="82"/>
    </location>
</feature>
<feature type="disulfide bond" evidence="2">
    <location>
        <begin position="56"/>
        <end position="73"/>
    </location>
</feature>
<feature type="disulfide bond" evidence="2">
    <location>
        <begin position="63"/>
        <end position="77"/>
    </location>
</feature>
<feature type="disulfide bond" evidence="2">
    <location>
        <begin position="72"/>
        <end position="81"/>
    </location>
</feature>